<comment type="catalytic activity">
    <reaction evidence="1">
        <text>(2R)-O-phospho-3-sulfolactate + H2O = (2R)-3-sulfolactate + phosphate</text>
        <dbReference type="Rhea" id="RHEA:23416"/>
        <dbReference type="ChEBI" id="CHEBI:15377"/>
        <dbReference type="ChEBI" id="CHEBI:15597"/>
        <dbReference type="ChEBI" id="CHEBI:43474"/>
        <dbReference type="ChEBI" id="CHEBI:58738"/>
        <dbReference type="EC" id="3.1.3.71"/>
    </reaction>
</comment>
<comment type="cofactor">
    <cofactor evidence="1">
        <name>Mg(2+)</name>
        <dbReference type="ChEBI" id="CHEBI:18420"/>
    </cofactor>
</comment>
<comment type="similarity">
    <text evidence="1">Belongs to the ComB family.</text>
</comment>
<sequence>MKLFVYHTPELTPKDQVPDCAIAVDVLRATSTIATVLSAGGEAVQVFSDLDELIAVSEAWPPQKRLRAGERGGGKVTGFELGNSPLDCTPELVEGRRLFISTTNGTRALKRVQDSATVLTAAFINRAAVVQYLLEKQPEIVWIVGSGWEGSYSLEDTACAGAIAHSVVEKSQLPPEELAGNDEVISAIALYSQWQNNLLGLFHHASHGKRLLRLECYEDLKYCSQTDVLTVLPIQQEAGVFKTKN</sequence>
<dbReference type="EC" id="3.1.3.71" evidence="1"/>
<dbReference type="EMBL" id="BA000019">
    <property type="protein sequence ID" value="BAB74267.1"/>
    <property type="molecule type" value="Genomic_DNA"/>
</dbReference>
<dbReference type="PIR" id="AI2126">
    <property type="entry name" value="AI2126"/>
</dbReference>
<dbReference type="RefSeq" id="WP_010996724.1">
    <property type="nucleotide sequence ID" value="NZ_RSCN01000002.1"/>
</dbReference>
<dbReference type="SMR" id="Q8YTZ5"/>
<dbReference type="STRING" id="103690.gene:10494599"/>
<dbReference type="KEGG" id="ana:all2568"/>
<dbReference type="eggNOG" id="COG2045">
    <property type="taxonomic scope" value="Bacteria"/>
</dbReference>
<dbReference type="OrthoDB" id="4913at2"/>
<dbReference type="Proteomes" id="UP000002483">
    <property type="component" value="Chromosome"/>
</dbReference>
<dbReference type="GO" id="GO:0050532">
    <property type="term" value="F:2-phosphosulfolactate phosphatase activity"/>
    <property type="evidence" value="ECO:0007669"/>
    <property type="project" value="UniProtKB-UniRule"/>
</dbReference>
<dbReference type="GO" id="GO:0000287">
    <property type="term" value="F:magnesium ion binding"/>
    <property type="evidence" value="ECO:0007669"/>
    <property type="project" value="UniProtKB-UniRule"/>
</dbReference>
<dbReference type="GO" id="GO:0050545">
    <property type="term" value="F:sulfopyruvate decarboxylase activity"/>
    <property type="evidence" value="ECO:0007669"/>
    <property type="project" value="TreeGrafter"/>
</dbReference>
<dbReference type="FunFam" id="3.90.1560.10:FF:000001">
    <property type="entry name" value="Probable 2-phosphosulfolactate phosphatase"/>
    <property type="match status" value="1"/>
</dbReference>
<dbReference type="Gene3D" id="3.90.1560.10">
    <property type="entry name" value="ComB-like"/>
    <property type="match status" value="1"/>
</dbReference>
<dbReference type="HAMAP" id="MF_00490">
    <property type="entry name" value="ComB"/>
    <property type="match status" value="1"/>
</dbReference>
<dbReference type="InterPro" id="IPR005238">
    <property type="entry name" value="ComB-like"/>
</dbReference>
<dbReference type="InterPro" id="IPR036702">
    <property type="entry name" value="ComB-like_sf"/>
</dbReference>
<dbReference type="NCBIfam" id="NF002056">
    <property type="entry name" value="PRK00886.1-5"/>
    <property type="match status" value="1"/>
</dbReference>
<dbReference type="PANTHER" id="PTHR37311">
    <property type="entry name" value="2-PHOSPHOSULFOLACTATE PHOSPHATASE-RELATED"/>
    <property type="match status" value="1"/>
</dbReference>
<dbReference type="PANTHER" id="PTHR37311:SF1">
    <property type="entry name" value="2-PHOSPHOSULFOLACTATE PHOSPHATASE-RELATED"/>
    <property type="match status" value="1"/>
</dbReference>
<dbReference type="Pfam" id="PF04029">
    <property type="entry name" value="2-ph_phosp"/>
    <property type="match status" value="1"/>
</dbReference>
<dbReference type="SUPFAM" id="SSF142823">
    <property type="entry name" value="ComB-like"/>
    <property type="match status" value="1"/>
</dbReference>
<evidence type="ECO:0000255" key="1">
    <source>
        <dbReference type="HAMAP-Rule" id="MF_00490"/>
    </source>
</evidence>
<protein>
    <recommendedName>
        <fullName evidence="1">Probable 2-phosphosulfolactate phosphatase</fullName>
        <ecNumber evidence="1">3.1.3.71</ecNumber>
    </recommendedName>
</protein>
<keyword id="KW-0378">Hydrolase</keyword>
<keyword id="KW-0460">Magnesium</keyword>
<keyword id="KW-1185">Reference proteome</keyword>
<name>COMB_NOSS1</name>
<reference key="1">
    <citation type="journal article" date="2001" name="DNA Res.">
        <title>Complete genomic sequence of the filamentous nitrogen-fixing cyanobacterium Anabaena sp. strain PCC 7120.</title>
        <authorList>
            <person name="Kaneko T."/>
            <person name="Nakamura Y."/>
            <person name="Wolk C.P."/>
            <person name="Kuritz T."/>
            <person name="Sasamoto S."/>
            <person name="Watanabe A."/>
            <person name="Iriguchi M."/>
            <person name="Ishikawa A."/>
            <person name="Kawashima K."/>
            <person name="Kimura T."/>
            <person name="Kishida Y."/>
            <person name="Kohara M."/>
            <person name="Matsumoto M."/>
            <person name="Matsuno A."/>
            <person name="Muraki A."/>
            <person name="Nakazaki N."/>
            <person name="Shimpo S."/>
            <person name="Sugimoto M."/>
            <person name="Takazawa M."/>
            <person name="Yamada M."/>
            <person name="Yasuda M."/>
            <person name="Tabata S."/>
        </authorList>
    </citation>
    <scope>NUCLEOTIDE SEQUENCE [LARGE SCALE GENOMIC DNA]</scope>
    <source>
        <strain>PCC 7120 / SAG 25.82 / UTEX 2576</strain>
    </source>
</reference>
<proteinExistence type="inferred from homology"/>
<feature type="chain" id="PRO_0000081463" description="Probable 2-phosphosulfolactate phosphatase">
    <location>
        <begin position="1"/>
        <end position="245"/>
    </location>
</feature>
<gene>
    <name evidence="1" type="primary">comB</name>
    <name type="ordered locus">all2568</name>
</gene>
<organism>
    <name type="scientific">Nostoc sp. (strain PCC 7120 / SAG 25.82 / UTEX 2576)</name>
    <dbReference type="NCBI Taxonomy" id="103690"/>
    <lineage>
        <taxon>Bacteria</taxon>
        <taxon>Bacillati</taxon>
        <taxon>Cyanobacteriota</taxon>
        <taxon>Cyanophyceae</taxon>
        <taxon>Nostocales</taxon>
        <taxon>Nostocaceae</taxon>
        <taxon>Nostoc</taxon>
    </lineage>
</organism>
<accession>Q8YTZ5</accession>